<comment type="function">
    <text evidence="1">One of the essential components for the initiation of protein synthesis. Stabilizes the binding of IF-2 and IF-3 on the 30S subunit to which N-formylmethionyl-tRNA(fMet) subsequently binds. Helps modulate mRNA selection, yielding the 30S pre-initiation complex (PIC). Upon addition of the 50S ribosomal subunit IF-1, IF-2 and IF-3 are released leaving the mature 70S translation initiation complex.</text>
</comment>
<comment type="subunit">
    <text evidence="1">Component of the 30S ribosomal translation pre-initiation complex which assembles on the 30S ribosome in the order IF-2 and IF-3, IF-1 and N-formylmethionyl-tRNA(fMet); mRNA recruitment can occur at any time during PIC assembly.</text>
</comment>
<comment type="subcellular location">
    <subcellularLocation>
        <location evidence="1">Cytoplasm</location>
    </subcellularLocation>
</comment>
<comment type="similarity">
    <text evidence="1">Belongs to the IF-1 family.</text>
</comment>
<dbReference type="EMBL" id="AL591983">
    <property type="protein sequence ID" value="CAD00688.1"/>
    <property type="molecule type" value="Genomic_DNA"/>
</dbReference>
<dbReference type="PIR" id="AB1401">
    <property type="entry name" value="AB1401"/>
</dbReference>
<dbReference type="RefSeq" id="NP_466133.1">
    <property type="nucleotide sequence ID" value="NC_003210.1"/>
</dbReference>
<dbReference type="RefSeq" id="WP_003720929.1">
    <property type="nucleotide sequence ID" value="NZ_CP149495.1"/>
</dbReference>
<dbReference type="SMR" id="P65110"/>
<dbReference type="STRING" id="169963.gene:17595328"/>
<dbReference type="PaxDb" id="169963-lmo2610"/>
<dbReference type="EnsemblBacteria" id="CAD00688">
    <property type="protein sequence ID" value="CAD00688"/>
    <property type="gene ID" value="CAD00688"/>
</dbReference>
<dbReference type="GeneID" id="93240491"/>
<dbReference type="GeneID" id="984951"/>
<dbReference type="KEGG" id="lmo:lmo2610"/>
<dbReference type="PATRIC" id="fig|169963.11.peg.2674"/>
<dbReference type="eggNOG" id="COG0361">
    <property type="taxonomic scope" value="Bacteria"/>
</dbReference>
<dbReference type="HOGENOM" id="CLU_151267_1_0_9"/>
<dbReference type="OrthoDB" id="9803250at2"/>
<dbReference type="PhylomeDB" id="P65110"/>
<dbReference type="BioCyc" id="LMON169963:LMO2610-MONOMER"/>
<dbReference type="Proteomes" id="UP000000817">
    <property type="component" value="Chromosome"/>
</dbReference>
<dbReference type="GO" id="GO:0005829">
    <property type="term" value="C:cytosol"/>
    <property type="evidence" value="ECO:0000318"/>
    <property type="project" value="GO_Central"/>
</dbReference>
<dbReference type="GO" id="GO:0043022">
    <property type="term" value="F:ribosome binding"/>
    <property type="evidence" value="ECO:0000318"/>
    <property type="project" value="GO_Central"/>
</dbReference>
<dbReference type="GO" id="GO:0019843">
    <property type="term" value="F:rRNA binding"/>
    <property type="evidence" value="ECO:0007669"/>
    <property type="project" value="UniProtKB-UniRule"/>
</dbReference>
<dbReference type="GO" id="GO:0003743">
    <property type="term" value="F:translation initiation factor activity"/>
    <property type="evidence" value="ECO:0007669"/>
    <property type="project" value="UniProtKB-UniRule"/>
</dbReference>
<dbReference type="CDD" id="cd04451">
    <property type="entry name" value="S1_IF1"/>
    <property type="match status" value="1"/>
</dbReference>
<dbReference type="FunFam" id="2.40.50.140:FF:000002">
    <property type="entry name" value="Translation initiation factor IF-1"/>
    <property type="match status" value="1"/>
</dbReference>
<dbReference type="Gene3D" id="2.40.50.140">
    <property type="entry name" value="Nucleic acid-binding proteins"/>
    <property type="match status" value="1"/>
</dbReference>
<dbReference type="HAMAP" id="MF_00075">
    <property type="entry name" value="IF_1"/>
    <property type="match status" value="1"/>
</dbReference>
<dbReference type="InterPro" id="IPR012340">
    <property type="entry name" value="NA-bd_OB-fold"/>
</dbReference>
<dbReference type="InterPro" id="IPR006196">
    <property type="entry name" value="RNA-binding_domain_S1_IF1"/>
</dbReference>
<dbReference type="InterPro" id="IPR003029">
    <property type="entry name" value="S1_domain"/>
</dbReference>
<dbReference type="InterPro" id="IPR004368">
    <property type="entry name" value="TIF_IF1"/>
</dbReference>
<dbReference type="NCBIfam" id="TIGR00008">
    <property type="entry name" value="infA"/>
    <property type="match status" value="1"/>
</dbReference>
<dbReference type="PANTHER" id="PTHR33370">
    <property type="entry name" value="TRANSLATION INITIATION FACTOR IF-1, CHLOROPLASTIC"/>
    <property type="match status" value="1"/>
</dbReference>
<dbReference type="PANTHER" id="PTHR33370:SF1">
    <property type="entry name" value="TRANSLATION INITIATION FACTOR IF-1, CHLOROPLASTIC"/>
    <property type="match status" value="1"/>
</dbReference>
<dbReference type="Pfam" id="PF01176">
    <property type="entry name" value="eIF-1a"/>
    <property type="match status" value="1"/>
</dbReference>
<dbReference type="SMART" id="SM00316">
    <property type="entry name" value="S1"/>
    <property type="match status" value="1"/>
</dbReference>
<dbReference type="SUPFAM" id="SSF50249">
    <property type="entry name" value="Nucleic acid-binding proteins"/>
    <property type="match status" value="1"/>
</dbReference>
<dbReference type="PROSITE" id="PS50832">
    <property type="entry name" value="S1_IF1_TYPE"/>
    <property type="match status" value="1"/>
</dbReference>
<sequence>MAKEDVIEVEGVVQETLPNAMFNVELENGHKVLATVSGKIRMHYIRILPGDKVTVELSPYDLTRGRITYRFK</sequence>
<feature type="chain" id="PRO_0000095815" description="Translation initiation factor IF-1">
    <location>
        <begin position="1"/>
        <end position="72"/>
    </location>
</feature>
<feature type="domain" description="S1-like" evidence="1">
    <location>
        <begin position="1"/>
        <end position="72"/>
    </location>
</feature>
<protein>
    <recommendedName>
        <fullName evidence="1">Translation initiation factor IF-1</fullName>
    </recommendedName>
</protein>
<keyword id="KW-0963">Cytoplasm</keyword>
<keyword id="KW-0396">Initiation factor</keyword>
<keyword id="KW-0648">Protein biosynthesis</keyword>
<keyword id="KW-1185">Reference proteome</keyword>
<keyword id="KW-0694">RNA-binding</keyword>
<keyword id="KW-0699">rRNA-binding</keyword>
<accession>P65110</accession>
<accession>Q927M9</accession>
<gene>
    <name evidence="1" type="primary">infA</name>
    <name type="ordered locus">lmo2610</name>
</gene>
<reference key="1">
    <citation type="journal article" date="2001" name="Science">
        <title>Comparative genomics of Listeria species.</title>
        <authorList>
            <person name="Glaser P."/>
            <person name="Frangeul L."/>
            <person name="Buchrieser C."/>
            <person name="Rusniok C."/>
            <person name="Amend A."/>
            <person name="Baquero F."/>
            <person name="Berche P."/>
            <person name="Bloecker H."/>
            <person name="Brandt P."/>
            <person name="Chakraborty T."/>
            <person name="Charbit A."/>
            <person name="Chetouani F."/>
            <person name="Couve E."/>
            <person name="de Daruvar A."/>
            <person name="Dehoux P."/>
            <person name="Domann E."/>
            <person name="Dominguez-Bernal G."/>
            <person name="Duchaud E."/>
            <person name="Durant L."/>
            <person name="Dussurget O."/>
            <person name="Entian K.-D."/>
            <person name="Fsihi H."/>
            <person name="Garcia-del Portillo F."/>
            <person name="Garrido P."/>
            <person name="Gautier L."/>
            <person name="Goebel W."/>
            <person name="Gomez-Lopez N."/>
            <person name="Hain T."/>
            <person name="Hauf J."/>
            <person name="Jackson D."/>
            <person name="Jones L.-M."/>
            <person name="Kaerst U."/>
            <person name="Kreft J."/>
            <person name="Kuhn M."/>
            <person name="Kunst F."/>
            <person name="Kurapkat G."/>
            <person name="Madueno E."/>
            <person name="Maitournam A."/>
            <person name="Mata Vicente J."/>
            <person name="Ng E."/>
            <person name="Nedjari H."/>
            <person name="Nordsiek G."/>
            <person name="Novella S."/>
            <person name="de Pablos B."/>
            <person name="Perez-Diaz J.-C."/>
            <person name="Purcell R."/>
            <person name="Remmel B."/>
            <person name="Rose M."/>
            <person name="Schlueter T."/>
            <person name="Simoes N."/>
            <person name="Tierrez A."/>
            <person name="Vazquez-Boland J.-A."/>
            <person name="Voss H."/>
            <person name="Wehland J."/>
            <person name="Cossart P."/>
        </authorList>
    </citation>
    <scope>NUCLEOTIDE SEQUENCE [LARGE SCALE GENOMIC DNA]</scope>
    <source>
        <strain>ATCC BAA-679 / EGD-e</strain>
    </source>
</reference>
<organism>
    <name type="scientific">Listeria monocytogenes serovar 1/2a (strain ATCC BAA-679 / EGD-e)</name>
    <dbReference type="NCBI Taxonomy" id="169963"/>
    <lineage>
        <taxon>Bacteria</taxon>
        <taxon>Bacillati</taxon>
        <taxon>Bacillota</taxon>
        <taxon>Bacilli</taxon>
        <taxon>Bacillales</taxon>
        <taxon>Listeriaceae</taxon>
        <taxon>Listeria</taxon>
    </lineage>
</organism>
<name>IF1_LISMO</name>
<proteinExistence type="inferred from homology"/>
<evidence type="ECO:0000255" key="1">
    <source>
        <dbReference type="HAMAP-Rule" id="MF_00075"/>
    </source>
</evidence>